<organism>
    <name type="scientific">Phenylobacterium zucineum (strain HLK1)</name>
    <dbReference type="NCBI Taxonomy" id="450851"/>
    <lineage>
        <taxon>Bacteria</taxon>
        <taxon>Pseudomonadati</taxon>
        <taxon>Pseudomonadota</taxon>
        <taxon>Alphaproteobacteria</taxon>
        <taxon>Caulobacterales</taxon>
        <taxon>Caulobacteraceae</taxon>
        <taxon>Phenylobacterium</taxon>
    </lineage>
</organism>
<sequence>MKLAVVLFNLGGPDGPEAVRPFLFNLFRDPAIIGLPAIARYPLAALISTTREKTAQANYAIMGGRSPLLPETEAQARALEAELARRAPDVEARAFIAMRYWRPLAKETARQVAAFAPDEIVLLPLYPQYSTTTTGSSVKDWARAYKGPGKSRTVCCYPNAPGLAEAHARLIRQTWEKAGKPSDIRLLFSAHGLPQKVVDAGDPYEAQVQASAAAVAALLPEFTDWGISYQSRVGPLKWLGPATDDEVRRAGAEGKGLLVSPIAFVSEHVETLVELDHEYAALAKESGVPVYLRAPAPGVAEPFIGTLAEAALGALDRSGAAPFGPWLCPAAHGRCACRNGGTA</sequence>
<reference key="1">
    <citation type="journal article" date="2008" name="BMC Genomics">
        <title>Complete genome of Phenylobacterium zucineum - a novel facultative intracellular bacterium isolated from human erythroleukemia cell line K562.</title>
        <authorList>
            <person name="Luo Y."/>
            <person name="Xu X."/>
            <person name="Ding Z."/>
            <person name="Liu Z."/>
            <person name="Zhang B."/>
            <person name="Yan Z."/>
            <person name="Sun J."/>
            <person name="Hu S."/>
            <person name="Hu X."/>
        </authorList>
    </citation>
    <scope>NUCLEOTIDE SEQUENCE [LARGE SCALE GENOMIC DNA]</scope>
    <source>
        <strain>HLK1</strain>
    </source>
</reference>
<evidence type="ECO:0000255" key="1">
    <source>
        <dbReference type="HAMAP-Rule" id="MF_00323"/>
    </source>
</evidence>
<gene>
    <name evidence="1" type="primary">hemH</name>
    <name type="ordered locus">PHZ_c3533</name>
</gene>
<comment type="function">
    <text evidence="1">Catalyzes the ferrous insertion into protoporphyrin IX.</text>
</comment>
<comment type="catalytic activity">
    <reaction evidence="1">
        <text>heme b + 2 H(+) = protoporphyrin IX + Fe(2+)</text>
        <dbReference type="Rhea" id="RHEA:22584"/>
        <dbReference type="ChEBI" id="CHEBI:15378"/>
        <dbReference type="ChEBI" id="CHEBI:29033"/>
        <dbReference type="ChEBI" id="CHEBI:57306"/>
        <dbReference type="ChEBI" id="CHEBI:60344"/>
        <dbReference type="EC" id="4.98.1.1"/>
    </reaction>
</comment>
<comment type="pathway">
    <text evidence="1">Porphyrin-containing compound metabolism; protoheme biosynthesis; protoheme from protoporphyrin-IX: step 1/1.</text>
</comment>
<comment type="subcellular location">
    <subcellularLocation>
        <location evidence="1">Cytoplasm</location>
    </subcellularLocation>
</comment>
<comment type="similarity">
    <text evidence="1">Belongs to the ferrochelatase family.</text>
</comment>
<keyword id="KW-0963">Cytoplasm</keyword>
<keyword id="KW-0350">Heme biosynthesis</keyword>
<keyword id="KW-0408">Iron</keyword>
<keyword id="KW-0456">Lyase</keyword>
<keyword id="KW-0479">Metal-binding</keyword>
<keyword id="KW-0627">Porphyrin biosynthesis</keyword>
<keyword id="KW-1185">Reference proteome</keyword>
<proteinExistence type="inferred from homology"/>
<dbReference type="EC" id="4.98.1.1" evidence="1"/>
<dbReference type="EMBL" id="CP000747">
    <property type="protein sequence ID" value="ACG79942.1"/>
    <property type="molecule type" value="Genomic_DNA"/>
</dbReference>
<dbReference type="RefSeq" id="WP_012524080.1">
    <property type="nucleotide sequence ID" value="NC_011144.1"/>
</dbReference>
<dbReference type="SMR" id="B4RD10"/>
<dbReference type="STRING" id="450851.PHZ_c3533"/>
<dbReference type="KEGG" id="pzu:PHZ_c3533"/>
<dbReference type="eggNOG" id="COG0276">
    <property type="taxonomic scope" value="Bacteria"/>
</dbReference>
<dbReference type="HOGENOM" id="CLU_018884_4_1_5"/>
<dbReference type="OrthoDB" id="9809741at2"/>
<dbReference type="UniPathway" id="UPA00252">
    <property type="reaction ID" value="UER00325"/>
</dbReference>
<dbReference type="Proteomes" id="UP000001868">
    <property type="component" value="Chromosome"/>
</dbReference>
<dbReference type="GO" id="GO:0005737">
    <property type="term" value="C:cytoplasm"/>
    <property type="evidence" value="ECO:0007669"/>
    <property type="project" value="UniProtKB-SubCell"/>
</dbReference>
<dbReference type="GO" id="GO:0004325">
    <property type="term" value="F:ferrochelatase activity"/>
    <property type="evidence" value="ECO:0007669"/>
    <property type="project" value="UniProtKB-UniRule"/>
</dbReference>
<dbReference type="GO" id="GO:0046872">
    <property type="term" value="F:metal ion binding"/>
    <property type="evidence" value="ECO:0007669"/>
    <property type="project" value="UniProtKB-KW"/>
</dbReference>
<dbReference type="GO" id="GO:0006783">
    <property type="term" value="P:heme biosynthetic process"/>
    <property type="evidence" value="ECO:0007669"/>
    <property type="project" value="UniProtKB-UniRule"/>
</dbReference>
<dbReference type="CDD" id="cd00419">
    <property type="entry name" value="Ferrochelatase_C"/>
    <property type="match status" value="1"/>
</dbReference>
<dbReference type="CDD" id="cd03411">
    <property type="entry name" value="Ferrochelatase_N"/>
    <property type="match status" value="1"/>
</dbReference>
<dbReference type="Gene3D" id="3.40.50.1400">
    <property type="match status" value="2"/>
</dbReference>
<dbReference type="HAMAP" id="MF_00323">
    <property type="entry name" value="Ferrochelatase"/>
    <property type="match status" value="1"/>
</dbReference>
<dbReference type="InterPro" id="IPR001015">
    <property type="entry name" value="Ferrochelatase"/>
</dbReference>
<dbReference type="InterPro" id="IPR019772">
    <property type="entry name" value="Ferrochelatase_AS"/>
</dbReference>
<dbReference type="InterPro" id="IPR033644">
    <property type="entry name" value="Ferrochelatase_C"/>
</dbReference>
<dbReference type="InterPro" id="IPR033659">
    <property type="entry name" value="Ferrochelatase_N"/>
</dbReference>
<dbReference type="NCBIfam" id="TIGR00109">
    <property type="entry name" value="hemH"/>
    <property type="match status" value="1"/>
</dbReference>
<dbReference type="PANTHER" id="PTHR11108">
    <property type="entry name" value="FERROCHELATASE"/>
    <property type="match status" value="1"/>
</dbReference>
<dbReference type="PANTHER" id="PTHR11108:SF1">
    <property type="entry name" value="FERROCHELATASE, MITOCHONDRIAL"/>
    <property type="match status" value="1"/>
</dbReference>
<dbReference type="Pfam" id="PF00762">
    <property type="entry name" value="Ferrochelatase"/>
    <property type="match status" value="1"/>
</dbReference>
<dbReference type="SUPFAM" id="SSF53800">
    <property type="entry name" value="Chelatase"/>
    <property type="match status" value="1"/>
</dbReference>
<dbReference type="PROSITE" id="PS00534">
    <property type="entry name" value="FERROCHELATASE"/>
    <property type="match status" value="1"/>
</dbReference>
<name>HEMH_PHEZH</name>
<accession>B4RD10</accession>
<protein>
    <recommendedName>
        <fullName evidence="1">Ferrochelatase</fullName>
        <ecNumber evidence="1">4.98.1.1</ecNumber>
    </recommendedName>
    <alternativeName>
        <fullName evidence="1">Heme synthase</fullName>
    </alternativeName>
    <alternativeName>
        <fullName evidence="1">Protoheme ferro-lyase</fullName>
    </alternativeName>
</protein>
<feature type="chain" id="PRO_1000116064" description="Ferrochelatase">
    <location>
        <begin position="1"/>
        <end position="343"/>
    </location>
</feature>
<feature type="binding site" evidence="1">
    <location>
        <position position="191"/>
    </location>
    <ligand>
        <name>Fe cation</name>
        <dbReference type="ChEBI" id="CHEBI:24875"/>
    </ligand>
</feature>
<feature type="binding site" evidence="1">
    <location>
        <position position="270"/>
    </location>
    <ligand>
        <name>Fe cation</name>
        <dbReference type="ChEBI" id="CHEBI:24875"/>
    </ligand>
</feature>